<comment type="function">
    <text evidence="1">Phosphorylation of dTMP to form dTDP in both de novo and salvage pathways of dTTP synthesis.</text>
</comment>
<comment type="catalytic activity">
    <reaction evidence="1">
        <text>dTMP + ATP = dTDP + ADP</text>
        <dbReference type="Rhea" id="RHEA:13517"/>
        <dbReference type="ChEBI" id="CHEBI:30616"/>
        <dbReference type="ChEBI" id="CHEBI:58369"/>
        <dbReference type="ChEBI" id="CHEBI:63528"/>
        <dbReference type="ChEBI" id="CHEBI:456216"/>
        <dbReference type="EC" id="2.7.4.9"/>
    </reaction>
</comment>
<comment type="similarity">
    <text evidence="1">Belongs to the thymidylate kinase family.</text>
</comment>
<gene>
    <name evidence="1" type="primary">tmk</name>
    <name type="ordered locus">LBL_2320</name>
</gene>
<dbReference type="EC" id="2.7.4.9" evidence="1"/>
<dbReference type="EMBL" id="CP000348">
    <property type="protein sequence ID" value="ABJ79713.1"/>
    <property type="molecule type" value="Genomic_DNA"/>
</dbReference>
<dbReference type="RefSeq" id="WP_011670718.1">
    <property type="nucleotide sequence ID" value="NC_008508.1"/>
</dbReference>
<dbReference type="SMR" id="Q04YY2"/>
<dbReference type="KEGG" id="lbl:LBL_2320"/>
<dbReference type="HOGENOM" id="CLU_049131_1_3_12"/>
<dbReference type="GO" id="GO:0005829">
    <property type="term" value="C:cytosol"/>
    <property type="evidence" value="ECO:0007669"/>
    <property type="project" value="TreeGrafter"/>
</dbReference>
<dbReference type="GO" id="GO:0005524">
    <property type="term" value="F:ATP binding"/>
    <property type="evidence" value="ECO:0007669"/>
    <property type="project" value="UniProtKB-UniRule"/>
</dbReference>
<dbReference type="GO" id="GO:0004798">
    <property type="term" value="F:dTMP kinase activity"/>
    <property type="evidence" value="ECO:0007669"/>
    <property type="project" value="UniProtKB-UniRule"/>
</dbReference>
<dbReference type="GO" id="GO:0006233">
    <property type="term" value="P:dTDP biosynthetic process"/>
    <property type="evidence" value="ECO:0007669"/>
    <property type="project" value="InterPro"/>
</dbReference>
<dbReference type="GO" id="GO:0006235">
    <property type="term" value="P:dTTP biosynthetic process"/>
    <property type="evidence" value="ECO:0007669"/>
    <property type="project" value="UniProtKB-UniRule"/>
</dbReference>
<dbReference type="GO" id="GO:0006227">
    <property type="term" value="P:dUDP biosynthetic process"/>
    <property type="evidence" value="ECO:0007669"/>
    <property type="project" value="TreeGrafter"/>
</dbReference>
<dbReference type="CDD" id="cd01672">
    <property type="entry name" value="TMPK"/>
    <property type="match status" value="1"/>
</dbReference>
<dbReference type="Gene3D" id="3.40.50.300">
    <property type="entry name" value="P-loop containing nucleotide triphosphate hydrolases"/>
    <property type="match status" value="1"/>
</dbReference>
<dbReference type="HAMAP" id="MF_00165">
    <property type="entry name" value="Thymidylate_kinase"/>
    <property type="match status" value="1"/>
</dbReference>
<dbReference type="InterPro" id="IPR027417">
    <property type="entry name" value="P-loop_NTPase"/>
</dbReference>
<dbReference type="InterPro" id="IPR039430">
    <property type="entry name" value="Thymidylate_kin-like_dom"/>
</dbReference>
<dbReference type="InterPro" id="IPR018095">
    <property type="entry name" value="Thymidylate_kin_CS"/>
</dbReference>
<dbReference type="InterPro" id="IPR018094">
    <property type="entry name" value="Thymidylate_kinase"/>
</dbReference>
<dbReference type="NCBIfam" id="TIGR00041">
    <property type="entry name" value="DTMP_kinase"/>
    <property type="match status" value="1"/>
</dbReference>
<dbReference type="PANTHER" id="PTHR10344">
    <property type="entry name" value="THYMIDYLATE KINASE"/>
    <property type="match status" value="1"/>
</dbReference>
<dbReference type="PANTHER" id="PTHR10344:SF4">
    <property type="entry name" value="UMP-CMP KINASE 2, MITOCHONDRIAL"/>
    <property type="match status" value="1"/>
</dbReference>
<dbReference type="Pfam" id="PF02223">
    <property type="entry name" value="Thymidylate_kin"/>
    <property type="match status" value="1"/>
</dbReference>
<dbReference type="SUPFAM" id="SSF52540">
    <property type="entry name" value="P-loop containing nucleoside triphosphate hydrolases"/>
    <property type="match status" value="1"/>
</dbReference>
<dbReference type="PROSITE" id="PS01331">
    <property type="entry name" value="THYMIDYLATE_KINASE"/>
    <property type="match status" value="1"/>
</dbReference>
<organism>
    <name type="scientific">Leptospira borgpetersenii serovar Hardjo-bovis (strain L550)</name>
    <dbReference type="NCBI Taxonomy" id="355276"/>
    <lineage>
        <taxon>Bacteria</taxon>
        <taxon>Pseudomonadati</taxon>
        <taxon>Spirochaetota</taxon>
        <taxon>Spirochaetia</taxon>
        <taxon>Leptospirales</taxon>
        <taxon>Leptospiraceae</taxon>
        <taxon>Leptospira</taxon>
    </lineage>
</organism>
<protein>
    <recommendedName>
        <fullName evidence="1">Thymidylate kinase</fullName>
        <ecNumber evidence="1">2.7.4.9</ecNumber>
    </recommendedName>
    <alternativeName>
        <fullName evidence="1">dTMP kinase</fullName>
    </alternativeName>
</protein>
<proteinExistence type="inferred from homology"/>
<feature type="chain" id="PRO_1000023217" description="Thymidylate kinase">
    <location>
        <begin position="1"/>
        <end position="205"/>
    </location>
</feature>
<feature type="binding site" evidence="1">
    <location>
        <begin position="13"/>
        <end position="20"/>
    </location>
    <ligand>
        <name>ATP</name>
        <dbReference type="ChEBI" id="CHEBI:30616"/>
    </ligand>
</feature>
<evidence type="ECO:0000255" key="1">
    <source>
        <dbReference type="HAMAP-Rule" id="MF_00165"/>
    </source>
</evidence>
<sequence length="205" mass="23868">MKIEKPIFVVFEGIDGSGKSTLCKSLTEKLTERGIPSVNFTEPTNFETGKYLRKFLRGEIDLERKEQIDAFLNDREESLRQNILPSLESGKNVLLDRYMYSTAAYQSGDDLLPETIIEKNLKKNFKIPDLLFYLDLNPAIALERLSQRKENKERFETLAQLEKIRSAYNRILPKETIRIDGVKGPDEIVQECLEIFLRNFNRKFL</sequence>
<name>KTHY_LEPBL</name>
<reference key="1">
    <citation type="journal article" date="2006" name="Proc. Natl. Acad. Sci. U.S.A.">
        <title>Genome reduction in Leptospira borgpetersenii reflects limited transmission potential.</title>
        <authorList>
            <person name="Bulach D.M."/>
            <person name="Zuerner R.L."/>
            <person name="Wilson P."/>
            <person name="Seemann T."/>
            <person name="McGrath A."/>
            <person name="Cullen P.A."/>
            <person name="Davis J."/>
            <person name="Johnson M."/>
            <person name="Kuczek E."/>
            <person name="Alt D.P."/>
            <person name="Peterson-Burch B."/>
            <person name="Coppel R.L."/>
            <person name="Rood J.I."/>
            <person name="Davies J.K."/>
            <person name="Adler B."/>
        </authorList>
    </citation>
    <scope>NUCLEOTIDE SEQUENCE [LARGE SCALE GENOMIC DNA]</scope>
    <source>
        <strain>L550</strain>
    </source>
</reference>
<keyword id="KW-0067">ATP-binding</keyword>
<keyword id="KW-0418">Kinase</keyword>
<keyword id="KW-0545">Nucleotide biosynthesis</keyword>
<keyword id="KW-0547">Nucleotide-binding</keyword>
<keyword id="KW-0808">Transferase</keyword>
<accession>Q04YY2</accession>